<evidence type="ECO:0000255" key="1">
    <source>
        <dbReference type="HAMAP-Rule" id="MF_00454"/>
    </source>
</evidence>
<dbReference type="EMBL" id="CP000243">
    <property type="protein sequence ID" value="ABE06128.1"/>
    <property type="molecule type" value="Genomic_DNA"/>
</dbReference>
<dbReference type="RefSeq" id="WP_000939738.1">
    <property type="nucleotide sequence ID" value="NZ_CP064825.1"/>
</dbReference>
<dbReference type="SMR" id="Q1RET6"/>
<dbReference type="GeneID" id="93776858"/>
<dbReference type="KEGG" id="eci:UTI89_C0628"/>
<dbReference type="HOGENOM" id="CLU_114342_3_3_6"/>
<dbReference type="Proteomes" id="UP000001952">
    <property type="component" value="Chromosome"/>
</dbReference>
<dbReference type="GO" id="GO:0005886">
    <property type="term" value="C:plasma membrane"/>
    <property type="evidence" value="ECO:0007669"/>
    <property type="project" value="UniProtKB-SubCell"/>
</dbReference>
<dbReference type="GO" id="GO:0062054">
    <property type="term" value="F:fluoride channel activity"/>
    <property type="evidence" value="ECO:0007669"/>
    <property type="project" value="UniProtKB-UniRule"/>
</dbReference>
<dbReference type="GO" id="GO:0046872">
    <property type="term" value="F:metal ion binding"/>
    <property type="evidence" value="ECO:0007669"/>
    <property type="project" value="UniProtKB-KW"/>
</dbReference>
<dbReference type="GO" id="GO:0140114">
    <property type="term" value="P:cellular detoxification of fluoride"/>
    <property type="evidence" value="ECO:0007669"/>
    <property type="project" value="UniProtKB-UniRule"/>
</dbReference>
<dbReference type="HAMAP" id="MF_00454">
    <property type="entry name" value="FluC"/>
    <property type="match status" value="1"/>
</dbReference>
<dbReference type="InterPro" id="IPR003691">
    <property type="entry name" value="FluC"/>
</dbReference>
<dbReference type="NCBIfam" id="TIGR00494">
    <property type="entry name" value="crcB"/>
    <property type="match status" value="1"/>
</dbReference>
<dbReference type="NCBIfam" id="NF010792">
    <property type="entry name" value="PRK14196.1"/>
    <property type="match status" value="1"/>
</dbReference>
<dbReference type="PANTHER" id="PTHR28259">
    <property type="entry name" value="FLUORIDE EXPORT PROTEIN 1-RELATED"/>
    <property type="match status" value="1"/>
</dbReference>
<dbReference type="PANTHER" id="PTHR28259:SF1">
    <property type="entry name" value="FLUORIDE EXPORT PROTEIN 1-RELATED"/>
    <property type="match status" value="1"/>
</dbReference>
<dbReference type="Pfam" id="PF02537">
    <property type="entry name" value="CRCB"/>
    <property type="match status" value="1"/>
</dbReference>
<accession>Q1RET6</accession>
<gene>
    <name evidence="1" type="primary">fluC</name>
    <name evidence="1" type="synonym">crcB</name>
    <name type="ordered locus">UTI89_C0628</name>
</gene>
<comment type="function">
    <text evidence="1">Fluoride-specific ion channel. Important for reducing fluoride concentration in the cell, thus reducing its toxicity.</text>
</comment>
<comment type="catalytic activity">
    <reaction evidence="1">
        <text>fluoride(in) = fluoride(out)</text>
        <dbReference type="Rhea" id="RHEA:76159"/>
        <dbReference type="ChEBI" id="CHEBI:17051"/>
    </reaction>
    <physiologicalReaction direction="left-to-right" evidence="1">
        <dbReference type="Rhea" id="RHEA:76160"/>
    </physiologicalReaction>
</comment>
<comment type="activity regulation">
    <text evidence="1">Na(+) is not transported, but it plays an essential structural role and its presence is essential for fluoride channel function.</text>
</comment>
<comment type="subcellular location">
    <subcellularLocation>
        <location evidence="1">Cell inner membrane</location>
        <topology evidence="1">Multi-pass membrane protein</topology>
    </subcellularLocation>
</comment>
<comment type="similarity">
    <text evidence="1">Belongs to the fluoride channel Fluc/FEX (TC 1.A.43) family.</text>
</comment>
<keyword id="KW-0997">Cell inner membrane</keyword>
<keyword id="KW-1003">Cell membrane</keyword>
<keyword id="KW-0407">Ion channel</keyword>
<keyword id="KW-0406">Ion transport</keyword>
<keyword id="KW-0472">Membrane</keyword>
<keyword id="KW-0479">Metal-binding</keyword>
<keyword id="KW-0915">Sodium</keyword>
<keyword id="KW-0812">Transmembrane</keyword>
<keyword id="KW-1133">Transmembrane helix</keyword>
<keyword id="KW-0813">Transport</keyword>
<reference key="1">
    <citation type="journal article" date="2006" name="Proc. Natl. Acad. Sci. U.S.A.">
        <title>Identification of genes subject to positive selection in uropathogenic strains of Escherichia coli: a comparative genomics approach.</title>
        <authorList>
            <person name="Chen S.L."/>
            <person name="Hung C.-S."/>
            <person name="Xu J."/>
            <person name="Reigstad C.S."/>
            <person name="Magrini V."/>
            <person name="Sabo A."/>
            <person name="Blasiar D."/>
            <person name="Bieri T."/>
            <person name="Meyer R.R."/>
            <person name="Ozersky P."/>
            <person name="Armstrong J.R."/>
            <person name="Fulton R.S."/>
            <person name="Latreille J.P."/>
            <person name="Spieth J."/>
            <person name="Hooton T.M."/>
            <person name="Mardis E.R."/>
            <person name="Hultgren S.J."/>
            <person name="Gordon J.I."/>
        </authorList>
    </citation>
    <scope>NUCLEOTIDE SEQUENCE [LARGE SCALE GENOMIC DNA]</scope>
    <source>
        <strain>UTI89 / UPEC</strain>
    </source>
</reference>
<protein>
    <recommendedName>
        <fullName evidence="1">Fluoride-specific ion channel FluC</fullName>
    </recommendedName>
</protein>
<sequence>MLQLLLAVFIGGGTGSVARWLLSMRFNPLHQAIPLGTLAANLIGAFIIGMGFAWFSRMTNIDPVWKVLITTGFCGGLTTFSTFSAEVVFLLQEGRFGWALLNVFVNLLGSFAMTALAFWLFSASTAH</sequence>
<name>FLUC_ECOUT</name>
<feature type="chain" id="PRO_0000252880" description="Fluoride-specific ion channel FluC">
    <location>
        <begin position="1"/>
        <end position="127"/>
    </location>
</feature>
<feature type="transmembrane region" description="Helical" evidence="1">
    <location>
        <begin position="4"/>
        <end position="24"/>
    </location>
</feature>
<feature type="transmembrane region" description="Helical" evidence="1">
    <location>
        <begin position="35"/>
        <end position="55"/>
    </location>
</feature>
<feature type="transmembrane region" description="Helical" evidence="1">
    <location>
        <begin position="71"/>
        <end position="91"/>
    </location>
</feature>
<feature type="transmembrane region" description="Helical" evidence="1">
    <location>
        <begin position="103"/>
        <end position="123"/>
    </location>
</feature>
<feature type="binding site" evidence="1">
    <location>
        <position position="75"/>
    </location>
    <ligand>
        <name>Na(+)</name>
        <dbReference type="ChEBI" id="CHEBI:29101"/>
        <note>structural</note>
    </ligand>
</feature>
<feature type="binding site" evidence="1">
    <location>
        <position position="78"/>
    </location>
    <ligand>
        <name>Na(+)</name>
        <dbReference type="ChEBI" id="CHEBI:29101"/>
        <note>structural</note>
    </ligand>
</feature>
<proteinExistence type="inferred from homology"/>
<organism>
    <name type="scientific">Escherichia coli (strain UTI89 / UPEC)</name>
    <dbReference type="NCBI Taxonomy" id="364106"/>
    <lineage>
        <taxon>Bacteria</taxon>
        <taxon>Pseudomonadati</taxon>
        <taxon>Pseudomonadota</taxon>
        <taxon>Gammaproteobacteria</taxon>
        <taxon>Enterobacterales</taxon>
        <taxon>Enterobacteriaceae</taxon>
        <taxon>Escherichia</taxon>
    </lineage>
</organism>